<dbReference type="EMBL" id="AF443189">
    <property type="protein sequence ID" value="AAQ04633.1"/>
    <property type="molecule type" value="Genomic_DNA"/>
</dbReference>
<dbReference type="SMR" id="Q5K654"/>
<dbReference type="VEuPathDB" id="FungiDB:PABG_03315"/>
<dbReference type="VEuPathDB" id="FungiDB:PADG_01877"/>
<dbReference type="GO" id="GO:0071014">
    <property type="term" value="C:post-mRNA release spliceosomal complex"/>
    <property type="evidence" value="ECO:0007669"/>
    <property type="project" value="TreeGrafter"/>
</dbReference>
<dbReference type="GO" id="GO:0071011">
    <property type="term" value="C:precatalytic spliceosome"/>
    <property type="evidence" value="ECO:0007669"/>
    <property type="project" value="TreeGrafter"/>
</dbReference>
<dbReference type="GO" id="GO:0000974">
    <property type="term" value="C:Prp19 complex"/>
    <property type="evidence" value="ECO:0007669"/>
    <property type="project" value="TreeGrafter"/>
</dbReference>
<dbReference type="GO" id="GO:0071007">
    <property type="term" value="C:U2-type catalytic step 2 spliceosome"/>
    <property type="evidence" value="ECO:0007669"/>
    <property type="project" value="TreeGrafter"/>
</dbReference>
<dbReference type="GO" id="GO:0000245">
    <property type="term" value="P:spliceosomal complex assembly"/>
    <property type="evidence" value="ECO:0007669"/>
    <property type="project" value="TreeGrafter"/>
</dbReference>
<dbReference type="FunFam" id="1.25.40.10:FF:000048">
    <property type="entry name" value="Cell cycle control protein"/>
    <property type="match status" value="1"/>
</dbReference>
<dbReference type="FunFam" id="1.25.40.10:FF:000306">
    <property type="entry name" value="Cell cycle control protein cwf4"/>
    <property type="match status" value="1"/>
</dbReference>
<dbReference type="FunFam" id="1.25.40.10:FF:000269">
    <property type="entry name" value="Crooked neck pre-mRNA-splicing factor 1"/>
    <property type="match status" value="1"/>
</dbReference>
<dbReference type="Gene3D" id="1.25.40.10">
    <property type="entry name" value="Tetratricopeptide repeat domain"/>
    <property type="match status" value="3"/>
</dbReference>
<dbReference type="InterPro" id="IPR003107">
    <property type="entry name" value="HAT"/>
</dbReference>
<dbReference type="InterPro" id="IPR055433">
    <property type="entry name" value="HAT_Syf1-like_N"/>
</dbReference>
<dbReference type="InterPro" id="IPR055430">
    <property type="entry name" value="HAT_Syf1_CNRKL1_C"/>
</dbReference>
<dbReference type="InterPro" id="IPR045075">
    <property type="entry name" value="Syf1-like"/>
</dbReference>
<dbReference type="InterPro" id="IPR011990">
    <property type="entry name" value="TPR-like_helical_dom_sf"/>
</dbReference>
<dbReference type="InterPro" id="IPR019734">
    <property type="entry name" value="TPR_rpt"/>
</dbReference>
<dbReference type="PANTHER" id="PTHR11246:SF3">
    <property type="entry name" value="CROOKED NECK-LIKE PROTEIN 1"/>
    <property type="match status" value="1"/>
</dbReference>
<dbReference type="PANTHER" id="PTHR11246">
    <property type="entry name" value="PRE-MRNA SPLICING FACTOR"/>
    <property type="match status" value="1"/>
</dbReference>
<dbReference type="Pfam" id="PF23241">
    <property type="entry name" value="HAT_PRP39_C"/>
    <property type="match status" value="1"/>
</dbReference>
<dbReference type="Pfam" id="PF23231">
    <property type="entry name" value="HAT_Syf1_CNRKL1_C"/>
    <property type="match status" value="2"/>
</dbReference>
<dbReference type="Pfam" id="PF23233">
    <property type="entry name" value="HAT_Syf1_CNRKL1_N"/>
    <property type="match status" value="1"/>
</dbReference>
<dbReference type="SMART" id="SM00386">
    <property type="entry name" value="HAT"/>
    <property type="match status" value="15"/>
</dbReference>
<dbReference type="SUPFAM" id="SSF48452">
    <property type="entry name" value="TPR-like"/>
    <property type="match status" value="2"/>
</dbReference>
<protein>
    <recommendedName>
        <fullName>Pre-mRNA-splicing factor CLF1</fullName>
    </recommendedName>
</protein>
<name>CLF1_PARBR</name>
<keyword id="KW-0507">mRNA processing</keyword>
<keyword id="KW-0508">mRNA splicing</keyword>
<keyword id="KW-0539">Nucleus</keyword>
<keyword id="KW-0677">Repeat</keyword>
<keyword id="KW-0747">Spliceosome</keyword>
<reference key="1">
    <citation type="journal article" date="2005" name="Med. Mycol.">
        <title>Random sequencing of Paracoccidioides brasiliensis genes.</title>
        <authorList>
            <person name="Reinoso C."/>
            <person name="Nino-Vega G."/>
            <person name="San-Blast G."/>
            <person name="Dominguez A."/>
        </authorList>
    </citation>
    <scope>NUCLEOTIDE SEQUENCE [LARGE SCALE GENOMIC DNA]</scope>
    <source>
        <strain>ATCC 32071 / IVIC Pb73 / C81</strain>
    </source>
</reference>
<organism>
    <name type="scientific">Paracoccidioides brasiliensis</name>
    <dbReference type="NCBI Taxonomy" id="121759"/>
    <lineage>
        <taxon>Eukaryota</taxon>
        <taxon>Fungi</taxon>
        <taxon>Dikarya</taxon>
        <taxon>Ascomycota</taxon>
        <taxon>Pezizomycotina</taxon>
        <taxon>Eurotiomycetes</taxon>
        <taxon>Eurotiomycetidae</taxon>
        <taxon>Onygenales</taxon>
        <taxon>Ajellomycetaceae</taxon>
        <taxon>Paracoccidioides</taxon>
    </lineage>
</organism>
<accession>Q5K654</accession>
<sequence length="677" mass="81798">MEASRGPPRVKNKAPAPQQISAEQLLREAVDRQEPALQAPTQRFADLEELHEYQGRKRKEFEDYVRRNRISMNNWMRYAQWELEQKEFRRARSVFERALDVDPTAVVLWIRYIEAEMKTRNINHARNLLDRAVTIYSRVDKLWYKYVYMEEMLGNIPGTRQVFERWMSWEPDEGAWGAYIKLEKRYNEFDRVRAIFERFTVVHPEPKNWIKWARFEEEYGTSDMVREVYGLAIETLGEDFMDEKLFIAYARYEAKLKEFERARAIYKYALDRLPRAKSVALHKAYTTFEKQFGDREGVEDVILSKRRVQYEEQIKENPKNYDIWFDFVRLEESSGDVERVRDVYERAIAQMPPSQEKRHWRRYIYLWIFYALWEELEAKDMERAHQIYQECIRLIPHKKFTFAKIWLMKAQFEIRQMDLQAARKTLGHAIGACPKDKLFKGYIDLERQLFEFVRCRKLFEKQIEWSPSNCQAWIKFAELERGLDDIDRARAIYELGISQPVLDMPELLWKSYIDFEEYEGEYDRTRALYERLLEKTNHVKVWINFARFEINIPEGEEEDEDEEEKPVSEEAKRRARMVFERAHKVFKEKEMKEERVALLNAWKSFEQTHGSPDDIAKIERQMPSKVKKRRKLDDDRYEEYLDYMFPADDESSAKLSQILQMAHKWKKEQASKASKET</sequence>
<comment type="function">
    <text evidence="1">Involved in pre-mRNA splicing and cell cycle progression. Required for the spliceosome assembly and initiation of the DNA replication (By similarity).</text>
</comment>
<comment type="subunit">
    <text evidence="1">Associated with the spliceosome.</text>
</comment>
<comment type="subcellular location">
    <subcellularLocation>
        <location evidence="1">Nucleus</location>
    </subcellularLocation>
</comment>
<comment type="similarity">
    <text evidence="2">Belongs to the crooked-neck family.</text>
</comment>
<feature type="chain" id="PRO_0000205749" description="Pre-mRNA-splicing factor CLF1">
    <location>
        <begin position="1"/>
        <end position="677"/>
    </location>
</feature>
<feature type="repeat" description="HAT 1">
    <location>
        <begin position="52"/>
        <end position="84"/>
    </location>
</feature>
<feature type="repeat" description="HAT 2">
    <location>
        <begin position="86"/>
        <end position="118"/>
    </location>
</feature>
<feature type="repeat" description="HAT 3">
    <location>
        <begin position="120"/>
        <end position="152"/>
    </location>
</feature>
<feature type="repeat" description="HAT 4">
    <location>
        <begin position="154"/>
        <end position="185"/>
    </location>
</feature>
<feature type="repeat" description="HAT 5">
    <location>
        <begin position="187"/>
        <end position="218"/>
    </location>
</feature>
<feature type="repeat" description="HAT 6">
    <location>
        <begin position="220"/>
        <end position="255"/>
    </location>
</feature>
<feature type="repeat" description="HAT 7">
    <location>
        <begin position="257"/>
        <end position="291"/>
    </location>
</feature>
<feature type="repeat" description="HAT 8">
    <location>
        <begin position="301"/>
        <end position="333"/>
    </location>
</feature>
<feature type="repeat" description="HAT 9">
    <location>
        <begin position="335"/>
        <end position="369"/>
    </location>
</feature>
<feature type="repeat" description="HAT 10">
    <location>
        <begin position="379"/>
        <end position="415"/>
    </location>
</feature>
<feature type="repeat" description="HAT 11">
    <location>
        <begin position="417"/>
        <end position="448"/>
    </location>
</feature>
<feature type="repeat" description="HAT 12">
    <location>
        <begin position="450"/>
        <end position="482"/>
    </location>
</feature>
<feature type="repeat" description="HAT 13">
    <location>
        <begin position="484"/>
        <end position="518"/>
    </location>
</feature>
<feature type="repeat" description="HAT 14">
    <location>
        <begin position="520"/>
        <end position="551"/>
    </location>
</feature>
<feature type="repeat" description="HAT 15">
    <location>
        <begin position="570"/>
        <end position="608"/>
    </location>
</feature>
<feature type="repeat" description="HAT 16">
    <location>
        <begin position="613"/>
        <end position="646"/>
    </location>
</feature>
<evidence type="ECO:0000250" key="1"/>
<evidence type="ECO:0000305" key="2"/>
<proteinExistence type="inferred from homology"/>
<gene>
    <name type="primary">CLF1</name>
</gene>